<accession>Q9H6H4</accession>
<accession>D3DSQ9</accession>
<accession>Q86VL1</accession>
<accession>Q9H6I5</accession>
<accession>Q9HBP4</accession>
<gene>
    <name type="primary">REEP4</name>
    <name type="synonym">C8orf20</name>
    <name type="ORF">PP432</name>
</gene>
<dbReference type="EMBL" id="AY562242">
    <property type="protein sequence ID" value="AAT70687.1"/>
    <property type="molecule type" value="mRNA"/>
</dbReference>
<dbReference type="EMBL" id="AK025899">
    <property type="protein sequence ID" value="BAB15274.1"/>
    <property type="molecule type" value="mRNA"/>
</dbReference>
<dbReference type="EMBL" id="AK025930">
    <property type="protein sequence ID" value="BAB15285.1"/>
    <property type="molecule type" value="mRNA"/>
</dbReference>
<dbReference type="EMBL" id="AK172846">
    <property type="protein sequence ID" value="BAD18810.1"/>
    <property type="molecule type" value="mRNA"/>
</dbReference>
<dbReference type="EMBL" id="AF218014">
    <property type="protein sequence ID" value="AAG17256.1"/>
    <property type="molecule type" value="mRNA"/>
</dbReference>
<dbReference type="EMBL" id="CR457353">
    <property type="protein sequence ID" value="CAG33634.1"/>
    <property type="molecule type" value="mRNA"/>
</dbReference>
<dbReference type="EMBL" id="AC105206">
    <property type="status" value="NOT_ANNOTATED_CDS"/>
    <property type="molecule type" value="Genomic_DNA"/>
</dbReference>
<dbReference type="EMBL" id="CH471080">
    <property type="protein sequence ID" value="EAW63710.1"/>
    <property type="molecule type" value="Genomic_DNA"/>
</dbReference>
<dbReference type="EMBL" id="CH471080">
    <property type="protein sequence ID" value="EAW63715.1"/>
    <property type="molecule type" value="Genomic_DNA"/>
</dbReference>
<dbReference type="EMBL" id="BC013048">
    <property type="protein sequence ID" value="AAH13048.1"/>
    <property type="molecule type" value="mRNA"/>
</dbReference>
<dbReference type="EMBL" id="BC050622">
    <property type="protein sequence ID" value="AAH50622.1"/>
    <property type="molecule type" value="mRNA"/>
</dbReference>
<dbReference type="CCDS" id="CCDS6024.1">
    <molecule id="Q9H6H4-1"/>
</dbReference>
<dbReference type="CCDS" id="CCDS83257.1">
    <molecule id="Q9H6H4-2"/>
</dbReference>
<dbReference type="RefSeq" id="NP_001303893.1">
    <property type="nucleotide sequence ID" value="NM_001316964.1"/>
</dbReference>
<dbReference type="RefSeq" id="NP_001303894.1">
    <molecule id="Q9H6H4-2"/>
    <property type="nucleotide sequence ID" value="NM_001316965.2"/>
</dbReference>
<dbReference type="RefSeq" id="NP_079508.2">
    <molecule id="Q9H6H4-1"/>
    <property type="nucleotide sequence ID" value="NM_025232.3"/>
</dbReference>
<dbReference type="BioGRID" id="123253">
    <property type="interactions" value="217"/>
</dbReference>
<dbReference type="FunCoup" id="Q9H6H4">
    <property type="interactions" value="607"/>
</dbReference>
<dbReference type="IntAct" id="Q9H6H4">
    <property type="interactions" value="157"/>
</dbReference>
<dbReference type="MINT" id="Q9H6H4"/>
<dbReference type="STRING" id="9606.ENSP00000303482"/>
<dbReference type="GlyGen" id="Q9H6H4">
    <property type="glycosylation" value="1 site, 1 O-linked glycan (1 site)"/>
</dbReference>
<dbReference type="iPTMnet" id="Q9H6H4"/>
<dbReference type="PhosphoSitePlus" id="Q9H6H4"/>
<dbReference type="SwissPalm" id="Q9H6H4"/>
<dbReference type="BioMuta" id="REEP4"/>
<dbReference type="DMDM" id="74733607"/>
<dbReference type="jPOST" id="Q9H6H4"/>
<dbReference type="MassIVE" id="Q9H6H4"/>
<dbReference type="PaxDb" id="9606-ENSP00000303482"/>
<dbReference type="PeptideAtlas" id="Q9H6H4"/>
<dbReference type="ProteomicsDB" id="80986">
    <molecule id="Q9H6H4-1"/>
</dbReference>
<dbReference type="ProteomicsDB" id="80987">
    <molecule id="Q9H6H4-2"/>
</dbReference>
<dbReference type="Pumba" id="Q9H6H4"/>
<dbReference type="Antibodypedia" id="22523">
    <property type="antibodies" value="138 antibodies from 23 providers"/>
</dbReference>
<dbReference type="DNASU" id="80346"/>
<dbReference type="Ensembl" id="ENST00000306306.8">
    <molecule id="Q9H6H4-1"/>
    <property type="protein sequence ID" value="ENSP00000303482.3"/>
    <property type="gene ID" value="ENSG00000168476.12"/>
</dbReference>
<dbReference type="Ensembl" id="ENST00000334530.9">
    <molecule id="Q9H6H4-2"/>
    <property type="protein sequence ID" value="ENSP00000333889.5"/>
    <property type="gene ID" value="ENSG00000168476.12"/>
</dbReference>
<dbReference type="GeneID" id="80346"/>
<dbReference type="KEGG" id="hsa:80346"/>
<dbReference type="MANE-Select" id="ENST00000306306.8">
    <property type="protein sequence ID" value="ENSP00000303482.3"/>
    <property type="RefSeq nucleotide sequence ID" value="NM_025232.4"/>
    <property type="RefSeq protein sequence ID" value="NP_079508.2"/>
</dbReference>
<dbReference type="UCSC" id="uc003xau.2">
    <molecule id="Q9H6H4-1"/>
    <property type="organism name" value="human"/>
</dbReference>
<dbReference type="AGR" id="HGNC:26176"/>
<dbReference type="CTD" id="80346"/>
<dbReference type="DisGeNET" id="80346"/>
<dbReference type="GeneCards" id="REEP4"/>
<dbReference type="HGNC" id="HGNC:26176">
    <property type="gene designation" value="REEP4"/>
</dbReference>
<dbReference type="HPA" id="ENSG00000168476">
    <property type="expression patterns" value="Tissue enhanced (esophagus, skin)"/>
</dbReference>
<dbReference type="MIM" id="609349">
    <property type="type" value="gene"/>
</dbReference>
<dbReference type="neXtProt" id="NX_Q9H6H4"/>
<dbReference type="OpenTargets" id="ENSG00000168476"/>
<dbReference type="PharmGKB" id="PA134890554"/>
<dbReference type="VEuPathDB" id="HostDB:ENSG00000168476"/>
<dbReference type="eggNOG" id="KOG1726">
    <property type="taxonomic scope" value="Eukaryota"/>
</dbReference>
<dbReference type="GeneTree" id="ENSGT00940000161674"/>
<dbReference type="HOGENOM" id="CLU_028431_4_1_1"/>
<dbReference type="InParanoid" id="Q9H6H4"/>
<dbReference type="OrthoDB" id="434647at2759"/>
<dbReference type="PAN-GO" id="Q9H6H4">
    <property type="GO annotations" value="5 GO annotations based on evolutionary models"/>
</dbReference>
<dbReference type="PhylomeDB" id="Q9H6H4"/>
<dbReference type="TreeFam" id="TF314177"/>
<dbReference type="PathwayCommons" id="Q9H6H4"/>
<dbReference type="SignaLink" id="Q9H6H4"/>
<dbReference type="BioGRID-ORCS" id="80346">
    <property type="hits" value="20 hits in 1150 CRISPR screens"/>
</dbReference>
<dbReference type="ChiTaRS" id="REEP4">
    <property type="organism name" value="human"/>
</dbReference>
<dbReference type="GenomeRNAi" id="80346"/>
<dbReference type="Pharos" id="Q9H6H4">
    <property type="development level" value="Tbio"/>
</dbReference>
<dbReference type="PRO" id="PR:Q9H6H4"/>
<dbReference type="Proteomes" id="UP000005640">
    <property type="component" value="Chromosome 8"/>
</dbReference>
<dbReference type="RNAct" id="Q9H6H4">
    <property type="molecule type" value="protein"/>
</dbReference>
<dbReference type="Bgee" id="ENSG00000168476">
    <property type="expression patterns" value="Expressed in lower esophagus mucosa and 137 other cell types or tissues"/>
</dbReference>
<dbReference type="ExpressionAtlas" id="Q9H6H4">
    <property type="expression patterns" value="baseline and differential"/>
</dbReference>
<dbReference type="GO" id="GO:0005881">
    <property type="term" value="C:cytoplasmic microtubule"/>
    <property type="evidence" value="ECO:0000318"/>
    <property type="project" value="GO_Central"/>
</dbReference>
<dbReference type="GO" id="GO:0005783">
    <property type="term" value="C:endoplasmic reticulum"/>
    <property type="evidence" value="ECO:0000314"/>
    <property type="project" value="HPA"/>
</dbReference>
<dbReference type="GO" id="GO:0005789">
    <property type="term" value="C:endoplasmic reticulum membrane"/>
    <property type="evidence" value="ECO:0000318"/>
    <property type="project" value="GO_Central"/>
</dbReference>
<dbReference type="GO" id="GO:0071782">
    <property type="term" value="C:endoplasmic reticulum tubular network"/>
    <property type="evidence" value="ECO:0000318"/>
    <property type="project" value="GO_Central"/>
</dbReference>
<dbReference type="GO" id="GO:0008017">
    <property type="term" value="F:microtubule binding"/>
    <property type="evidence" value="ECO:0000250"/>
    <property type="project" value="UniProtKB"/>
</dbReference>
<dbReference type="GO" id="GO:0051301">
    <property type="term" value="P:cell division"/>
    <property type="evidence" value="ECO:0007669"/>
    <property type="project" value="UniProtKB-KW"/>
</dbReference>
<dbReference type="GO" id="GO:0071786">
    <property type="term" value="P:endoplasmic reticulum tubular network organization"/>
    <property type="evidence" value="ECO:0000318"/>
    <property type="project" value="GO_Central"/>
</dbReference>
<dbReference type="GO" id="GO:0007084">
    <property type="term" value="P:mitotic nuclear membrane reassembly"/>
    <property type="evidence" value="ECO:0000315"/>
    <property type="project" value="UniProtKB"/>
</dbReference>
<dbReference type="GO" id="GO:0006998">
    <property type="term" value="P:nuclear envelope organization"/>
    <property type="evidence" value="ECO:0000315"/>
    <property type="project" value="UniProtKB"/>
</dbReference>
<dbReference type="InterPro" id="IPR004345">
    <property type="entry name" value="TB2_DP1_HVA22"/>
</dbReference>
<dbReference type="PANTHER" id="PTHR12300">
    <property type="entry name" value="HVA22-LIKE PROTEINS"/>
    <property type="match status" value="1"/>
</dbReference>
<dbReference type="PANTHER" id="PTHR12300:SF36">
    <property type="entry name" value="RECEPTOR EXPRESSION-ENHANCING PROTEIN 4"/>
    <property type="match status" value="1"/>
</dbReference>
<dbReference type="Pfam" id="PF03134">
    <property type="entry name" value="TB2_DP1_HVA22"/>
    <property type="match status" value="1"/>
</dbReference>
<feature type="chain" id="PRO_0000101830" description="Receptor expression-enhancing protein 4">
    <location>
        <begin position="1"/>
        <end position="257"/>
    </location>
</feature>
<feature type="transmembrane region" description="Helical" evidence="1">
    <location>
        <begin position="1"/>
        <end position="21"/>
    </location>
</feature>
<feature type="transmembrane region" description="Helical" evidence="1">
    <location>
        <begin position="42"/>
        <end position="62"/>
    </location>
</feature>
<feature type="region of interest" description="Disordered" evidence="2">
    <location>
        <begin position="183"/>
        <end position="257"/>
    </location>
</feature>
<feature type="modified residue" description="Phosphoserine" evidence="7 8 9">
    <location>
        <position position="152"/>
    </location>
</feature>
<feature type="modified residue" description="Phosphoserine" evidence="7">
    <location>
        <position position="194"/>
    </location>
</feature>
<feature type="modified residue" description="Phosphothreonine" evidence="7">
    <location>
        <position position="196"/>
    </location>
</feature>
<feature type="modified residue" description="Phosphoserine" evidence="7">
    <location>
        <position position="202"/>
    </location>
</feature>
<feature type="modified residue" description="Phosphothreonine" evidence="7">
    <location>
        <position position="250"/>
    </location>
</feature>
<feature type="modified residue" description="Phosphoserine" evidence="7">
    <location>
        <position position="253"/>
    </location>
</feature>
<feature type="splice variant" id="VSP_016636" description="In isoform 2." evidence="5">
    <original>SQGALAGRLRSFSMQDLRSISDAPAPAYHDPLYL</original>
    <variation>GTGPGACRTATPRMSVGQILRQSPGRQPGPERSP</variation>
    <location>
        <begin position="140"/>
        <end position="173"/>
    </location>
</feature>
<feature type="splice variant" id="VSP_016637" description="In isoform 2." evidence="5">
    <location>
        <begin position="174"/>
        <end position="257"/>
    </location>
</feature>
<feature type="sequence conflict" description="In Ref. 3; AAG17256." evidence="6" ref="3">
    <original>R</original>
    <variation>Q</variation>
    <location>
        <position position="149"/>
    </location>
</feature>
<feature type="sequence conflict" description="In Ref. 2; BAB15274." evidence="6" ref="2">
    <original>S</original>
    <variation>P</variation>
    <location>
        <position position="241"/>
    </location>
</feature>
<proteinExistence type="evidence at protein level"/>
<sequence>MVSWMICRLVVLVFGMLCPAYASYKAVKTKNIREYVRWMMYWIVFALFMAAEIVTDIFISWFPFYYEIKMAFVLWLLSPYTKGASLLYRKFVHPSLSRHEKEIDAYIVQAKERSYETVLSFGKRGLNIAASAAVQAATKSQGALAGRLRSFSMQDLRSISDAPAPAYHDPLYLEDQVSHRRPPIGYRAGGLQDSDTEDECWSDTEAVPRAPARPREKPLIRSQSLRVVKRKPPVREGTSRSLKVRTRKKTVPSDVDS</sequence>
<keyword id="KW-0025">Alternative splicing</keyword>
<keyword id="KW-0131">Cell cycle</keyword>
<keyword id="KW-0132">Cell division</keyword>
<keyword id="KW-0256">Endoplasmic reticulum</keyword>
<keyword id="KW-0472">Membrane</keyword>
<keyword id="KW-0493">Microtubule</keyword>
<keyword id="KW-0498">Mitosis</keyword>
<keyword id="KW-0597">Phosphoprotein</keyword>
<keyword id="KW-1267">Proteomics identification</keyword>
<keyword id="KW-1185">Reference proteome</keyword>
<keyword id="KW-0812">Transmembrane</keyword>
<keyword id="KW-1133">Transmembrane helix</keyword>
<comment type="function">
    <text evidence="4">Microtubule-binding protein required to ensure proper cell division and nuclear envelope reassembly by sequestering the endoplasmic reticulum away from chromosomes during mitosis. Probably acts by clearing the endoplasmic reticulum membrane from metaphase chromosomes.</text>
</comment>
<comment type="interaction">
    <interactant intactId="EBI-7545592">
        <id>Q9H6H4</id>
    </interactant>
    <interactant intactId="EBI-1754287">
        <id>Q9NRZ5</id>
        <label>AGPAT4</label>
    </interactant>
    <organismsDiffer>false</organismsDiffer>
    <experiments>3</experiments>
</comment>
<comment type="interaction">
    <interactant intactId="EBI-7545592">
        <id>Q9H6H4</id>
    </interactant>
    <interactant intactId="EBI-721179">
        <id>P27449</id>
        <label>ATP6V0C</label>
    </interactant>
    <organismsDiffer>false</organismsDiffer>
    <experiments>3</experiments>
</comment>
<comment type="interaction">
    <interactant intactId="EBI-7545592">
        <id>Q9H6H4</id>
    </interactant>
    <interactant intactId="EBI-78035">
        <id>Q07817</id>
        <label>BCL2L1</label>
    </interactant>
    <organismsDiffer>false</organismsDiffer>
    <experiments>3</experiments>
</comment>
<comment type="interaction">
    <interactant intactId="EBI-7545592">
        <id>Q9H6H4</id>
    </interactant>
    <interactant intactId="EBI-749204">
        <id>O15155</id>
        <label>BET1</label>
    </interactant>
    <organismsDiffer>false</organismsDiffer>
    <experiments>3</experiments>
</comment>
<comment type="interaction">
    <interactant intactId="EBI-7545592">
        <id>Q9H6H4</id>
    </interactant>
    <interactant intactId="EBI-700794">
        <id>Q13323</id>
        <label>BIK</label>
    </interactant>
    <organismsDiffer>false</organismsDiffer>
    <experiments>3</experiments>
</comment>
<comment type="interaction">
    <interactant intactId="EBI-7545592">
        <id>Q9H6H4</id>
    </interactant>
    <interactant intactId="EBI-3922513">
        <id>O95393</id>
        <label>BMP10</label>
    </interactant>
    <organismsDiffer>false</organismsDiffer>
    <experiments>3</experiments>
</comment>
<comment type="interaction">
    <interactant intactId="EBI-7545592">
        <id>Q9H6H4</id>
    </interactant>
    <interactant intactId="EBI-2810045">
        <id>P09871</id>
        <label>C1S</label>
    </interactant>
    <organismsDiffer>false</organismsDiffer>
    <experiments>3</experiments>
</comment>
<comment type="interaction">
    <interactant intactId="EBI-7545592">
        <id>Q9H6H4</id>
    </interactant>
    <interactant intactId="EBI-12822627">
        <id>O14523</id>
        <label>C2CD2L</label>
    </interactant>
    <organismsDiffer>false</organismsDiffer>
    <experiments>3</experiments>
</comment>
<comment type="interaction">
    <interactant intactId="EBI-7545592">
        <id>Q9H6H4</id>
    </interactant>
    <interactant intactId="EBI-12003442">
        <id>Q8WVX3-2</id>
        <label>C4orf3</label>
    </interactant>
    <organismsDiffer>false</organismsDiffer>
    <experiments>3</experiments>
</comment>
<comment type="interaction">
    <interactant intactId="EBI-7545592">
        <id>Q9H6H4</id>
    </interactant>
    <interactant intactId="EBI-9686780">
        <id>Q06432</id>
        <label>CACNG1</label>
    </interactant>
    <organismsDiffer>false</organismsDiffer>
    <experiments>3</experiments>
</comment>
<comment type="interaction">
    <interactant intactId="EBI-7545592">
        <id>Q9H6H4</id>
    </interactant>
    <interactant intactId="EBI-10271156">
        <id>Q8NHW4</id>
        <label>CCL4L2</label>
    </interactant>
    <organismsDiffer>false</organismsDiffer>
    <experiments>3</experiments>
</comment>
<comment type="interaction">
    <interactant intactId="EBI-7545592">
        <id>Q9H6H4</id>
    </interactant>
    <interactant intactId="EBI-11959453">
        <id>Q8NHS1</id>
        <label>CLDND2</label>
    </interactant>
    <organismsDiffer>false</organismsDiffer>
    <experiments>3</experiments>
</comment>
<comment type="interaction">
    <interactant intactId="EBI-7545592">
        <id>Q9H6H4</id>
    </interactant>
    <interactant intactId="EBI-7247651">
        <id>Q96MX0</id>
        <label>CMTM3</label>
    </interactant>
    <organismsDiffer>false</organismsDiffer>
    <experiments>3</experiments>
</comment>
<comment type="interaction">
    <interactant intactId="EBI-7545592">
        <id>Q9H6H4</id>
    </interactant>
    <interactant intactId="EBI-372265">
        <id>P21964</id>
        <label>COMT</label>
    </interactant>
    <organismsDiffer>false</organismsDiffer>
    <experiments>3</experiments>
</comment>
<comment type="interaction">
    <interactant intactId="EBI-7545592">
        <id>Q9H6H4</id>
    </interactant>
    <interactant intactId="EBI-1058710">
        <id>O43169</id>
        <label>CYB5B</label>
    </interactant>
    <organismsDiffer>false</organismsDiffer>
    <experiments>3</experiments>
</comment>
<comment type="interaction">
    <interactant intactId="EBI-7545592">
        <id>Q9H6H4</id>
    </interactant>
    <interactant intactId="EBI-1046040">
        <id>P00387</id>
        <label>CYB5R3</label>
    </interactant>
    <organismsDiffer>false</organismsDiffer>
    <experiments>3</experiments>
</comment>
<comment type="interaction">
    <interactant intactId="EBI-7545592">
        <id>Q9H6H4</id>
    </interactant>
    <interactant intactId="EBI-1752413">
        <id>P78329</id>
        <label>CYP4F2</label>
    </interactant>
    <organismsDiffer>false</organismsDiffer>
    <experiments>3</experiments>
</comment>
<comment type="interaction">
    <interactant intactId="EBI-7545592">
        <id>Q9H6H4</id>
    </interactant>
    <interactant intactId="EBI-12135455">
        <id>Q96PD2-2</id>
        <label>DCBLD2</label>
    </interactant>
    <organismsDiffer>false</organismsDiffer>
    <experiments>3</experiments>
</comment>
<comment type="interaction">
    <interactant intactId="EBI-7545592">
        <id>Q9H6H4</id>
    </interactant>
    <interactant intactId="EBI-398977">
        <id>Q9BUN8</id>
        <label>DERL1</label>
    </interactant>
    <organismsDiffer>false</organismsDiffer>
    <experiments>3</experiments>
</comment>
<comment type="interaction">
    <interactant intactId="EBI-7545592">
        <id>Q9H6H4</id>
    </interactant>
    <interactant intactId="EBI-12831978">
        <id>Q6ZPD8</id>
        <label>DGAT2L6</label>
    </interactant>
    <organismsDiffer>false</organismsDiffer>
    <experiments>3</experiments>
</comment>
<comment type="interaction">
    <interactant intactId="EBI-7545592">
        <id>Q9H6H4</id>
    </interactant>
    <interactant intactId="EBI-8639143">
        <id>Q96LL9</id>
        <label>DNAJC30</label>
    </interactant>
    <organismsDiffer>false</organismsDiffer>
    <experiments>3</experiments>
</comment>
<comment type="interaction">
    <interactant intactId="EBI-7545592">
        <id>Q9H6H4</id>
    </interactant>
    <interactant intactId="EBI-711490">
        <id>Q9UKR5</id>
        <label>ERG28</label>
    </interactant>
    <organismsDiffer>false</organismsDiffer>
    <experiments>3</experiments>
</comment>
<comment type="interaction">
    <interactant intactId="EBI-7545592">
        <id>Q9H6H4</id>
    </interactant>
    <interactant intactId="EBI-12118888">
        <id>Q96D05-2</id>
        <label>FAM241B</label>
    </interactant>
    <organismsDiffer>false</organismsDiffer>
    <experiments>3</experiments>
</comment>
<comment type="interaction">
    <interactant intactId="EBI-7545592">
        <id>Q9H6H4</id>
    </interactant>
    <interactant intactId="EBI-12701460">
        <id>Q01740</id>
        <label>FMO1</label>
    </interactant>
    <organismsDiffer>false</organismsDiffer>
    <experiments>3</experiments>
</comment>
<comment type="interaction">
    <interactant intactId="EBI-7545592">
        <id>Q9H6H4</id>
    </interactant>
    <interactant intactId="EBI-714482">
        <id>Q9BWH2</id>
        <label>FUNDC2</label>
    </interactant>
    <organismsDiffer>false</organismsDiffer>
    <experiments>3</experiments>
</comment>
<comment type="interaction">
    <interactant intactId="EBI-7545592">
        <id>Q9H6H4</id>
    </interactant>
    <interactant intactId="EBI-11991950">
        <id>Q8WWP7</id>
        <label>GIMAP1</label>
    </interactant>
    <organismsDiffer>false</organismsDiffer>
    <experiments>3</experiments>
</comment>
<comment type="interaction">
    <interactant intactId="EBI-7545592">
        <id>Q9H6H4</id>
    </interactant>
    <interactant intactId="EBI-10194756">
        <id>P06028</id>
        <label>GYPB</label>
    </interactant>
    <organismsDiffer>false</organismsDiffer>
    <experiments>3</experiments>
</comment>
<comment type="interaction">
    <interactant intactId="EBI-7545592">
        <id>Q9H6H4</id>
    </interactant>
    <interactant intactId="EBI-3918847">
        <id>Q9H2F3</id>
        <label>HSD3B7</label>
    </interactant>
    <organismsDiffer>false</organismsDiffer>
    <experiments>3</experiments>
</comment>
<comment type="interaction">
    <interactant intactId="EBI-7545592">
        <id>Q9H6H4</id>
    </interactant>
    <interactant intactId="EBI-12937691">
        <id>Q9BUP3-3</id>
        <label>HTATIP2</label>
    </interactant>
    <organismsDiffer>false</organismsDiffer>
    <experiments>3</experiments>
</comment>
<comment type="interaction">
    <interactant intactId="EBI-7545592">
        <id>Q9H6H4</id>
    </interactant>
    <interactant intactId="EBI-7932862">
        <id>Q01628</id>
        <label>IFITM3</label>
    </interactant>
    <organismsDiffer>false</organismsDiffer>
    <experiments>4</experiments>
</comment>
<comment type="interaction">
    <interactant intactId="EBI-7545592">
        <id>Q9H6H4</id>
    </interactant>
    <interactant intactId="EBI-2568251">
        <id>P11215</id>
        <label>ITGAM</label>
    </interactant>
    <organismsDiffer>false</organismsDiffer>
    <experiments>3</experiments>
</comment>
<comment type="interaction">
    <interactant intactId="EBI-7545592">
        <id>Q9H6H4</id>
    </interactant>
    <interactant intactId="EBI-12268900">
        <id>Q68G75</id>
        <label>LEMD1</label>
    </interactant>
    <organismsDiffer>false</organismsDiffer>
    <experiments>3</experiments>
</comment>
<comment type="interaction">
    <interactant intactId="EBI-7545592">
        <id>Q9H6H4</id>
    </interactant>
    <interactant intactId="EBI-2561428">
        <id>Q9Y2U8</id>
        <label>LEMD3</label>
    </interactant>
    <organismsDiffer>false</organismsDiffer>
    <experiments>3</experiments>
</comment>
<comment type="interaction">
    <interactant intactId="EBI-7545592">
        <id>Q9H6H4</id>
    </interactant>
    <interactant intactId="EBI-750776">
        <id>O95214</id>
        <label>LEPROTL1</label>
    </interactant>
    <organismsDiffer>false</organismsDiffer>
    <experiments>3</experiments>
</comment>
<comment type="interaction">
    <interactant intactId="EBI-7545592">
        <id>Q9H6H4</id>
    </interactant>
    <interactant intactId="EBI-12133176">
        <id>Q9UIQ6-2</id>
        <label>LNPEP</label>
    </interactant>
    <organismsDiffer>false</organismsDiffer>
    <experiments>3</experiments>
</comment>
<comment type="interaction">
    <interactant intactId="EBI-7545592">
        <id>Q9H6H4</id>
    </interactant>
    <interactant intactId="EBI-944295">
        <id>Q969L2</id>
        <label>MAL2</label>
    </interactant>
    <organismsDiffer>false</organismsDiffer>
    <experiments>3</experiments>
</comment>
<comment type="interaction">
    <interactant intactId="EBI-7545592">
        <id>Q9H6H4</id>
    </interactant>
    <interactant intactId="EBI-12179105">
        <id>O75425</id>
        <label>MOSPD3</label>
    </interactant>
    <organismsDiffer>false</organismsDiffer>
    <experiments>3</experiments>
</comment>
<comment type="interaction">
    <interactant intactId="EBI-7545592">
        <id>Q9H6H4</id>
    </interactant>
    <interactant intactId="EBI-2808234">
        <id>P11836</id>
        <label>MS4A1</label>
    </interactant>
    <organismsDiffer>false</organismsDiffer>
    <experiments>3</experiments>
</comment>
<comment type="interaction">
    <interactant intactId="EBI-7545592">
        <id>Q9H6H4</id>
    </interactant>
    <interactant intactId="EBI-713635">
        <id>O43639</id>
        <label>NCK2</label>
    </interactant>
    <organismsDiffer>false</organismsDiffer>
    <experiments>3</experiments>
</comment>
<comment type="interaction">
    <interactant intactId="EBI-7545592">
        <id>Q9H6H4</id>
    </interactant>
    <interactant intactId="EBI-12051377">
        <id>Q8N912</id>
        <label>NRAC</label>
    </interactant>
    <organismsDiffer>false</organismsDiffer>
    <experiments>3</experiments>
</comment>
<comment type="interaction">
    <interactant intactId="EBI-7545592">
        <id>Q9H6H4</id>
    </interactant>
    <interactant intactId="EBI-1054848">
        <id>Q9P0S3</id>
        <label>ORMDL1</label>
    </interactant>
    <organismsDiffer>false</organismsDiffer>
    <experiments>3</experiments>
</comment>
<comment type="interaction">
    <interactant intactId="EBI-7545592">
        <id>Q9H6H4</id>
    </interactant>
    <interactant intactId="EBI-981985">
        <id>Q9Y5Y5</id>
        <label>PEX16</label>
    </interactant>
    <organismsDiffer>false</organismsDiffer>
    <experiments>3</experiments>
</comment>
<comment type="interaction">
    <interactant intactId="EBI-7545592">
        <id>Q9H6H4</id>
    </interactant>
    <interactant intactId="EBI-608347">
        <id>Q04941</id>
        <label>PLP2</label>
    </interactant>
    <organismsDiffer>false</organismsDiffer>
    <experiments>3</experiments>
</comment>
<comment type="interaction">
    <interactant intactId="EBI-7545592">
        <id>Q9H6H4</id>
    </interactant>
    <interactant intactId="EBI-2845982">
        <id>Q01453</id>
        <label>PMP22</label>
    </interactant>
    <organismsDiffer>false</organismsDiffer>
    <experiments>3</experiments>
</comment>
<comment type="interaction">
    <interactant intactId="EBI-7545592">
        <id>Q9H6H4</id>
    </interactant>
    <interactant intactId="EBI-14210385">
        <id>Q59EV6</id>
        <label>PPGB</label>
    </interactant>
    <organismsDiffer>false</organismsDiffer>
    <experiments>3</experiments>
</comment>
<comment type="interaction">
    <interactant intactId="EBI-7545592">
        <id>Q9H6H4</id>
    </interactant>
    <interactant intactId="EBI-2506064">
        <id>O60831</id>
        <label>PRAF2</label>
    </interactant>
    <organismsDiffer>false</organismsDiffer>
    <experiments>3</experiments>
</comment>
<comment type="interaction">
    <interactant intactId="EBI-7545592">
        <id>Q9H6H4</id>
    </interactant>
    <interactant intactId="EBI-10244780">
        <id>Q5QGT7</id>
        <label>RTP2</label>
    </interactant>
    <organismsDiffer>false</organismsDiffer>
    <experiments>3</experiments>
</comment>
<comment type="interaction">
    <interactant intactId="EBI-7545592">
        <id>Q9H6H4</id>
    </interactant>
    <interactant intactId="EBI-12275482">
        <id>Q96DX8</id>
        <label>RTP4</label>
    </interactant>
    <organismsDiffer>false</organismsDiffer>
    <experiments>3</experiments>
</comment>
<comment type="interaction">
    <interactant intactId="EBI-7545592">
        <id>Q9H6H4</id>
    </interactant>
    <interactant intactId="EBI-1058865">
        <id>O75396</id>
        <label>SEC22B</label>
    </interactant>
    <organismsDiffer>false</organismsDiffer>
    <experiments>3</experiments>
</comment>
<comment type="interaction">
    <interactant intactId="EBI-7545592">
        <id>Q9H6H4</id>
    </interactant>
    <interactant intactId="EBI-9679163">
        <id>Q9Y6D0</id>
        <label>SELENOK</label>
    </interactant>
    <organismsDiffer>false</organismsDiffer>
    <experiments>3</experiments>
</comment>
<comment type="interaction">
    <interactant intactId="EBI-7545592">
        <id>Q9H6H4</id>
    </interactant>
    <interactant intactId="EBI-10277687">
        <id>Q8WWX9</id>
        <label>SELENOM</label>
    </interactant>
    <organismsDiffer>false</organismsDiffer>
    <experiments>3</experiments>
</comment>
<comment type="interaction">
    <interactant intactId="EBI-7545592">
        <id>Q9H6H4</id>
    </interactant>
    <interactant intactId="EBI-2115181">
        <id>O75920</id>
        <label>SERF1B</label>
    </interactant>
    <organismsDiffer>false</organismsDiffer>
    <experiments>3</experiments>
</comment>
<comment type="interaction">
    <interactant intactId="EBI-7545592">
        <id>Q9H6H4</id>
    </interactant>
    <interactant intactId="EBI-10329948">
        <id>Q9Y6X1</id>
        <label>SERP1</label>
    </interactant>
    <organismsDiffer>false</organismsDiffer>
    <experiments>3</experiments>
</comment>
<comment type="interaction">
    <interactant intactId="EBI-7545592">
        <id>Q9H6H4</id>
    </interactant>
    <interactant intactId="EBI-476295">
        <id>P31947</id>
        <label>SFN</label>
    </interactant>
    <organismsDiffer>false</organismsDiffer>
    <experiments>4</experiments>
</comment>
<comment type="interaction">
    <interactant intactId="EBI-7545592">
        <id>Q9H6H4</id>
    </interactant>
    <interactant intactId="EBI-2854842">
        <id>Q8WV19</id>
        <label>SFT2D1</label>
    </interactant>
    <organismsDiffer>false</organismsDiffer>
    <experiments>3</experiments>
</comment>
<comment type="interaction">
    <interactant intactId="EBI-7545592">
        <id>Q9H6H4</id>
    </interactant>
    <interactant intactId="EBI-4402330">
        <id>O95562</id>
        <label>SFT2D2</label>
    </interactant>
    <organismsDiffer>false</organismsDiffer>
    <experiments>3</experiments>
</comment>
<comment type="interaction">
    <interactant intactId="EBI-7545592">
        <id>Q9H6H4</id>
    </interactant>
    <interactant intactId="EBI-355861">
        <id>Q9H9B4</id>
        <label>SFXN1</label>
    </interactant>
    <organismsDiffer>false</organismsDiffer>
    <experiments>3</experiments>
</comment>
<comment type="interaction">
    <interactant intactId="EBI-7545592">
        <id>Q9H6H4</id>
    </interactant>
    <interactant intactId="EBI-6381136">
        <id>Q96NB2</id>
        <label>SFXN2</label>
    </interactant>
    <organismsDiffer>false</organismsDiffer>
    <experiments>3</experiments>
</comment>
<comment type="interaction">
    <interactant intactId="EBI-7545592">
        <id>Q9H6H4</id>
    </interactant>
    <interactant intactId="EBI-1171999">
        <id>Q9BWM7</id>
        <label>SFXN3</label>
    </interactant>
    <organismsDiffer>false</organismsDiffer>
    <experiments>3</experiments>
</comment>
<comment type="interaction">
    <interactant intactId="EBI-7545592">
        <id>Q9H6H4</id>
    </interactant>
    <interactant intactId="EBI-10281975">
        <id>Q96AG3</id>
        <label>SLC25A46</label>
    </interactant>
    <organismsDiffer>false</organismsDiffer>
    <experiments>3</experiments>
</comment>
<comment type="interaction">
    <interactant intactId="EBI-7545592">
        <id>Q9H6H4</id>
    </interactant>
    <interactant intactId="EBI-10262251">
        <id>Q8IWU4</id>
        <label>SLC30A8</label>
    </interactant>
    <organismsDiffer>false</organismsDiffer>
    <experiments>3</experiments>
</comment>
<comment type="interaction">
    <interactant intactId="EBI-7545592">
        <id>Q9H6H4</id>
    </interactant>
    <interactant intactId="EBI-13292283">
        <id>Q9UHI5</id>
        <label>SLC7A8</label>
    </interactant>
    <organismsDiffer>false</organismsDiffer>
    <experiments>3</experiments>
</comment>
<comment type="interaction">
    <interactant intactId="EBI-7545592">
        <id>Q9H6H4</id>
    </interactant>
    <interactant intactId="EBI-10226799">
        <id>Q0VAQ4</id>
        <label>SMAGP</label>
    </interactant>
    <organismsDiffer>false</organismsDiffer>
    <experiments>3</experiments>
</comment>
<comment type="interaction">
    <interactant intactId="EBI-7545592">
        <id>Q9H6H4</id>
    </interactant>
    <interactant intactId="EBI-12188413">
        <id>B2RUZ4</id>
        <label>SMIM1</label>
    </interactant>
    <organismsDiffer>false</organismsDiffer>
    <experiments>3</experiments>
</comment>
<comment type="interaction">
    <interactant intactId="EBI-7545592">
        <id>Q9H6H4</id>
    </interactant>
    <interactant intactId="EBI-3905171">
        <id>Q14534</id>
        <label>SQLE</label>
    </interactant>
    <organismsDiffer>false</organismsDiffer>
    <experiments>3</experiments>
</comment>
<comment type="interaction">
    <interactant intactId="EBI-7545592">
        <id>Q9H6H4</id>
    </interactant>
    <interactant intactId="EBI-738687">
        <id>P02808</id>
        <label>STATH</label>
    </interactant>
    <organismsDiffer>false</organismsDiffer>
    <experiments>3</experiments>
</comment>
<comment type="interaction">
    <interactant intactId="EBI-7545592">
        <id>Q9H6H4</id>
    </interactant>
    <interactant intactId="EBI-1394295">
        <id>Q13277</id>
        <label>STX3</label>
    </interactant>
    <organismsDiffer>false</organismsDiffer>
    <experiments>3</experiments>
</comment>
<comment type="interaction">
    <interactant intactId="EBI-7545592">
        <id>Q9H6H4</id>
    </interactant>
    <interactant intactId="EBI-714206">
        <id>Q13190</id>
        <label>STX5</label>
    </interactant>
    <organismsDiffer>false</organismsDiffer>
    <experiments>3</experiments>
</comment>
<comment type="interaction">
    <interactant intactId="EBI-7545592">
        <id>Q9H6H4</id>
    </interactant>
    <interactant intactId="EBI-1049004">
        <id>P57105</id>
        <label>SYNJ2BP</label>
    </interactant>
    <organismsDiffer>false</organismsDiffer>
    <experiments>3</experiments>
</comment>
<comment type="interaction">
    <interactant intactId="EBI-7545592">
        <id>Q9H6H4</id>
    </interactant>
    <interactant intactId="EBI-1200494">
        <id>Q9Y584</id>
        <label>TIMM22</label>
    </interactant>
    <organismsDiffer>false</organismsDiffer>
    <experiments>3</experiments>
</comment>
<comment type="interaction">
    <interactant intactId="EBI-7545592">
        <id>Q9H6H4</id>
    </interactant>
    <interactant intactId="EBI-727322">
        <id>Q9BXJ8</id>
        <label>TMEM120A</label>
    </interactant>
    <organismsDiffer>false</organismsDiffer>
    <experiments>3</experiments>
</comment>
<comment type="interaction">
    <interactant intactId="EBI-7545592">
        <id>Q9H6H4</id>
    </interactant>
    <interactant intactId="EBI-10171534">
        <id>A0PK00</id>
        <label>TMEM120B</label>
    </interactant>
    <organismsDiffer>false</organismsDiffer>
    <experiments>3</experiments>
</comment>
<comment type="interaction">
    <interactant intactId="EBI-7545592">
        <id>Q9H6H4</id>
    </interactant>
    <interactant intactId="EBI-12155101">
        <id>Q9BTD3</id>
        <label>TMEM121</label>
    </interactant>
    <organismsDiffer>false</organismsDiffer>
    <experiments>3</experiments>
</comment>
<comment type="interaction">
    <interactant intactId="EBI-7545592">
        <id>Q9H6H4</id>
    </interactant>
    <interactant intactId="EBI-10694905">
        <id>Q5BJH2-2</id>
        <label>TMEM128</label>
    </interactant>
    <organismsDiffer>false</organismsDiffer>
    <experiments>3</experiments>
</comment>
<comment type="interaction">
    <interactant intactId="EBI-7545592">
        <id>Q9H6H4</id>
    </interactant>
    <interactant intactId="EBI-17684533">
        <id>Q9NRX6</id>
        <label>TMEM167B</label>
    </interactant>
    <organismsDiffer>false</organismsDiffer>
    <experiments>3</experiments>
</comment>
<comment type="interaction">
    <interactant intactId="EBI-7545592">
        <id>Q9H6H4</id>
    </interactant>
    <interactant intactId="EBI-17196383">
        <id>Q96B42-2</id>
        <label>TMEM18</label>
    </interactant>
    <organismsDiffer>false</organismsDiffer>
    <experiments>3</experiments>
</comment>
<comment type="interaction">
    <interactant intactId="EBI-7545592">
        <id>Q9H6H4</id>
    </interactant>
    <interactant intactId="EBI-741829">
        <id>Q96HH6</id>
        <label>TMEM19</label>
    </interactant>
    <organismsDiffer>false</organismsDiffer>
    <experiments>3</experiments>
</comment>
<comment type="interaction">
    <interactant intactId="EBI-7545592">
        <id>Q9H6H4</id>
    </interactant>
    <interactant intactId="EBI-10265825">
        <id>Q8N511</id>
        <label>TMEM199</label>
    </interactant>
    <organismsDiffer>false</organismsDiffer>
    <experiments>3</experiments>
</comment>
<comment type="interaction">
    <interactant intactId="EBI-7545592">
        <id>Q9H6H4</id>
    </interactant>
    <interactant intactId="EBI-12876824">
        <id>Q9BTX3</id>
        <label>TMEM208</label>
    </interactant>
    <organismsDiffer>false</organismsDiffer>
    <experiments>3</experiments>
</comment>
<comment type="interaction">
    <interactant intactId="EBI-7545592">
        <id>Q9H6H4</id>
    </interactant>
    <interactant intactId="EBI-12195227">
        <id>Q8NBD8</id>
        <label>TMEM229B</label>
    </interactant>
    <organismsDiffer>false</organismsDiffer>
    <experiments>3</experiments>
</comment>
<comment type="interaction">
    <interactant intactId="EBI-7545592">
        <id>Q9H6H4</id>
    </interactant>
    <interactant intactId="EBI-11956809">
        <id>Q8TBM7</id>
        <label>TMEM254</label>
    </interactant>
    <organismsDiffer>false</organismsDiffer>
    <experiments>3</experiments>
</comment>
<comment type="interaction">
    <interactant intactId="EBI-7545592">
        <id>Q9H6H4</id>
    </interactant>
    <interactant intactId="EBI-12903814">
        <id>O95807</id>
        <label>TMEM50A</label>
    </interactant>
    <organismsDiffer>false</organismsDiffer>
    <experiments>3</experiments>
</comment>
<comment type="interaction">
    <interactant intactId="EBI-7545592">
        <id>Q9H6H4</id>
    </interactant>
    <interactant intactId="EBI-726044">
        <id>Q9NW97</id>
        <label>TMEM51</label>
    </interactant>
    <organismsDiffer>false</organismsDiffer>
    <experiments>3</experiments>
</comment>
<comment type="interaction">
    <interactant intactId="EBI-7545592">
        <id>Q9H6H4</id>
    </interactant>
    <interactant intactId="EBI-2852148">
        <id>Q9H2L4</id>
        <label>TMEM60</label>
    </interactant>
    <organismsDiffer>false</organismsDiffer>
    <experiments>3</experiments>
</comment>
<comment type="interaction">
    <interactant intactId="EBI-7545592">
        <id>Q9H6H4</id>
    </interactant>
    <interactant intactId="EBI-6656213">
        <id>Q6PI78</id>
        <label>TMEM65</label>
    </interactant>
    <organismsDiffer>false</organismsDiffer>
    <experiments>3</experiments>
</comment>
<comment type="interaction">
    <interactant intactId="EBI-7545592">
        <id>Q9H6H4</id>
    </interactant>
    <interactant intactId="EBI-12015604">
        <id>Q8N2M4</id>
        <label>TMEM86A</label>
    </interactant>
    <organismsDiffer>false</organismsDiffer>
    <experiments>3</experiments>
</comment>
<comment type="interaction">
    <interactant intactId="EBI-7545592">
        <id>Q9H6H4</id>
    </interactant>
    <interactant intactId="EBI-11724433">
        <id>Q6ZT21</id>
        <label>TMPPE</label>
    </interactant>
    <organismsDiffer>false</organismsDiffer>
    <experiments>3</experiments>
</comment>
<comment type="interaction">
    <interactant intactId="EBI-7545592">
        <id>Q9H6H4</id>
    </interactant>
    <interactant intactId="EBI-6447886">
        <id>Q9Y320</id>
        <label>TMX2</label>
    </interactant>
    <organismsDiffer>false</organismsDiffer>
    <experiments>3</experiments>
</comment>
<comment type="interaction">
    <interactant intactId="EBI-7545592">
        <id>Q9H6H4</id>
    </interactant>
    <interactant intactId="EBI-17249488">
        <id>Q6ZUI0</id>
        <label>TPRG1</label>
    </interactant>
    <organismsDiffer>false</organismsDiffer>
    <experiments>3</experiments>
</comment>
<comment type="interaction">
    <interactant intactId="EBI-7545592">
        <id>Q9H6H4</id>
    </interactant>
    <interactant intactId="EBI-12003468">
        <id>A0AVG3</id>
        <label>TSNARE1</label>
    </interactant>
    <organismsDiffer>false</organismsDiffer>
    <experiments>3</experiments>
</comment>
<comment type="interaction">
    <interactant intactId="EBI-7545592">
        <id>Q9H6H4</id>
    </interactant>
    <interactant intactId="EBI-3914288">
        <id>O60636</id>
        <label>TSPAN2</label>
    </interactant>
    <organismsDiffer>false</organismsDiffer>
    <experiments>3</experiments>
</comment>
<comment type="interaction">
    <interactant intactId="EBI-7545592">
        <id>Q9H6H4</id>
    </interactant>
    <interactant intactId="EBI-11343401">
        <id>Q9NYZ1</id>
        <label>TVP23B</label>
    </interactant>
    <organismsDiffer>false</organismsDiffer>
    <experiments>3</experiments>
</comment>
<comment type="interaction">
    <interactant intactId="EBI-7545592">
        <id>Q9H6H4</id>
    </interactant>
    <interactant intactId="EBI-988826">
        <id>Q9Y385</id>
        <label>UBE2J1</label>
    </interactant>
    <organismsDiffer>false</organismsDiffer>
    <experiments>3</experiments>
</comment>
<comment type="interaction">
    <interactant intactId="EBI-7545592">
        <id>Q9H6H4</id>
    </interactant>
    <interactant intactId="EBI-2819725">
        <id>Q9Y5Z9</id>
        <label>UBIAD1</label>
    </interactant>
    <organismsDiffer>false</organismsDiffer>
    <experiments>3</experiments>
</comment>
<comment type="interaction">
    <interactant intactId="EBI-7545592">
        <id>Q9H6H4</id>
    </interactant>
    <interactant intactId="EBI-7601760">
        <id>Q53HI1</id>
        <label>UNC50</label>
    </interactant>
    <organismsDiffer>false</organismsDiffer>
    <experiments>3</experiments>
</comment>
<comment type="interaction">
    <interactant intactId="EBI-7545592">
        <id>Q9H6H4</id>
    </interactant>
    <interactant intactId="EBI-12097582">
        <id>P23763-3</id>
        <label>VAMP1</label>
    </interactant>
    <organismsDiffer>false</organismsDiffer>
    <experiments>3</experiments>
</comment>
<comment type="interaction">
    <interactant intactId="EBI-7545592">
        <id>Q9H6H4</id>
    </interactant>
    <interactant intactId="EBI-744953">
        <id>O75379</id>
        <label>VAMP4</label>
    </interactant>
    <organismsDiffer>false</organismsDiffer>
    <experiments>3</experiments>
</comment>
<comment type="interaction">
    <interactant intactId="EBI-7545592">
        <id>Q9H6H4</id>
    </interactant>
    <interactant intactId="EBI-10191195">
        <id>O95183</id>
        <label>VAMP5</label>
    </interactant>
    <organismsDiffer>false</organismsDiffer>
    <experiments>3</experiments>
</comment>
<comment type="interaction">
    <interactant intactId="EBI-7545592">
        <id>Q9H6H4</id>
    </interactant>
    <interactant intactId="EBI-1188298">
        <id>O95292</id>
        <label>VAPB</label>
    </interactant>
    <organismsDiffer>false</organismsDiffer>
    <experiments>3</experiments>
</comment>
<comment type="interaction">
    <interactant intactId="EBI-7545592">
        <id>Q9H6H4</id>
    </interactant>
    <interactant intactId="EBI-723716">
        <id>Q9UEU0</id>
        <label>VTI1B</label>
    </interactant>
    <organismsDiffer>false</organismsDiffer>
    <experiments>3</experiments>
</comment>
<comment type="interaction">
    <interactant intactId="EBI-7545592">
        <id>Q9H6H4</id>
    </interactant>
    <interactant intactId="EBI-2799703">
        <id>O95070</id>
        <label>YIF1A</label>
    </interactant>
    <organismsDiffer>false</organismsDiffer>
    <experiments>3</experiments>
</comment>
<comment type="interaction">
    <interactant intactId="EBI-7545592">
        <id>Q9H6H4</id>
    </interactant>
    <interactant intactId="EBI-751253">
        <id>Q9BSR8</id>
        <label>YIPF4</label>
    </interactant>
    <organismsDiffer>false</organismsDiffer>
    <experiments>3</experiments>
</comment>
<comment type="subcellular location">
    <subcellularLocation>
        <location evidence="4">Endoplasmic reticulum membrane</location>
        <topology evidence="4">Multi-pass membrane protein</topology>
    </subcellularLocation>
</comment>
<comment type="alternative products">
    <event type="alternative splicing"/>
    <isoform>
        <id>Q9H6H4-1</id>
        <name>1</name>
        <sequence type="displayed"/>
    </isoform>
    <isoform>
        <id>Q9H6H4-2</id>
        <name>2</name>
        <sequence type="described" ref="VSP_016636 VSP_016637"/>
    </isoform>
</comment>
<comment type="tissue specificity">
    <text evidence="3">Expressed in circumvallate papillae and testis.</text>
</comment>
<comment type="similarity">
    <text evidence="6">Belongs to the DP1 family.</text>
</comment>
<name>REEP4_HUMAN</name>
<organism>
    <name type="scientific">Homo sapiens</name>
    <name type="common">Human</name>
    <dbReference type="NCBI Taxonomy" id="9606"/>
    <lineage>
        <taxon>Eukaryota</taxon>
        <taxon>Metazoa</taxon>
        <taxon>Chordata</taxon>
        <taxon>Craniata</taxon>
        <taxon>Vertebrata</taxon>
        <taxon>Euteleostomi</taxon>
        <taxon>Mammalia</taxon>
        <taxon>Eutheria</taxon>
        <taxon>Euarchontoglires</taxon>
        <taxon>Primates</taxon>
        <taxon>Haplorrhini</taxon>
        <taxon>Catarrhini</taxon>
        <taxon>Hominidae</taxon>
        <taxon>Homo</taxon>
    </lineage>
</organism>
<protein>
    <recommendedName>
        <fullName>Receptor expression-enhancing protein 4</fullName>
    </recommendedName>
</protein>
<evidence type="ECO:0000255" key="1"/>
<evidence type="ECO:0000256" key="2">
    <source>
        <dbReference type="SAM" id="MobiDB-lite"/>
    </source>
</evidence>
<evidence type="ECO:0000269" key="3">
    <source>
    </source>
</evidence>
<evidence type="ECO:0000269" key="4">
    <source>
    </source>
</evidence>
<evidence type="ECO:0000303" key="5">
    <source>
    </source>
</evidence>
<evidence type="ECO:0000305" key="6"/>
<evidence type="ECO:0007744" key="7">
    <source>
    </source>
</evidence>
<evidence type="ECO:0007744" key="8">
    <source>
    </source>
</evidence>
<evidence type="ECO:0007744" key="9">
    <source>
    </source>
</evidence>
<reference key="1">
    <citation type="journal article" date="2004" name="Cell">
        <title>RTP family members induce functional expression of mammalian odorant receptors.</title>
        <authorList>
            <person name="Saito H."/>
            <person name="Kubota M."/>
            <person name="Roberts R.W."/>
            <person name="Chi Q."/>
            <person name="Matsunami H."/>
        </authorList>
    </citation>
    <scope>NUCLEOTIDE SEQUENCE [MRNA] (ISOFORM 1)</scope>
</reference>
<reference key="2">
    <citation type="journal article" date="2004" name="Nat. Genet.">
        <title>Complete sequencing and characterization of 21,243 full-length human cDNAs.</title>
        <authorList>
            <person name="Ota T."/>
            <person name="Suzuki Y."/>
            <person name="Nishikawa T."/>
            <person name="Otsuki T."/>
            <person name="Sugiyama T."/>
            <person name="Irie R."/>
            <person name="Wakamatsu A."/>
            <person name="Hayashi K."/>
            <person name="Sato H."/>
            <person name="Nagai K."/>
            <person name="Kimura K."/>
            <person name="Makita H."/>
            <person name="Sekine M."/>
            <person name="Obayashi M."/>
            <person name="Nishi T."/>
            <person name="Shibahara T."/>
            <person name="Tanaka T."/>
            <person name="Ishii S."/>
            <person name="Yamamoto J."/>
            <person name="Saito K."/>
            <person name="Kawai Y."/>
            <person name="Isono Y."/>
            <person name="Nakamura Y."/>
            <person name="Nagahari K."/>
            <person name="Murakami K."/>
            <person name="Yasuda T."/>
            <person name="Iwayanagi T."/>
            <person name="Wagatsuma M."/>
            <person name="Shiratori A."/>
            <person name="Sudo H."/>
            <person name="Hosoiri T."/>
            <person name="Kaku Y."/>
            <person name="Kodaira H."/>
            <person name="Kondo H."/>
            <person name="Sugawara M."/>
            <person name="Takahashi M."/>
            <person name="Kanda K."/>
            <person name="Yokoi T."/>
            <person name="Furuya T."/>
            <person name="Kikkawa E."/>
            <person name="Omura Y."/>
            <person name="Abe K."/>
            <person name="Kamihara K."/>
            <person name="Katsuta N."/>
            <person name="Sato K."/>
            <person name="Tanikawa M."/>
            <person name="Yamazaki M."/>
            <person name="Ninomiya K."/>
            <person name="Ishibashi T."/>
            <person name="Yamashita H."/>
            <person name="Murakawa K."/>
            <person name="Fujimori K."/>
            <person name="Tanai H."/>
            <person name="Kimata M."/>
            <person name="Watanabe M."/>
            <person name="Hiraoka S."/>
            <person name="Chiba Y."/>
            <person name="Ishida S."/>
            <person name="Ono Y."/>
            <person name="Takiguchi S."/>
            <person name="Watanabe S."/>
            <person name="Yosida M."/>
            <person name="Hotuta T."/>
            <person name="Kusano J."/>
            <person name="Kanehori K."/>
            <person name="Takahashi-Fujii A."/>
            <person name="Hara H."/>
            <person name="Tanase T.-O."/>
            <person name="Nomura Y."/>
            <person name="Togiya S."/>
            <person name="Komai F."/>
            <person name="Hara R."/>
            <person name="Takeuchi K."/>
            <person name="Arita M."/>
            <person name="Imose N."/>
            <person name="Musashino K."/>
            <person name="Yuuki H."/>
            <person name="Oshima A."/>
            <person name="Sasaki N."/>
            <person name="Aotsuka S."/>
            <person name="Yoshikawa Y."/>
            <person name="Matsunawa H."/>
            <person name="Ichihara T."/>
            <person name="Shiohata N."/>
            <person name="Sano S."/>
            <person name="Moriya S."/>
            <person name="Momiyama H."/>
            <person name="Satoh N."/>
            <person name="Takami S."/>
            <person name="Terashima Y."/>
            <person name="Suzuki O."/>
            <person name="Nakagawa S."/>
            <person name="Senoh A."/>
            <person name="Mizoguchi H."/>
            <person name="Goto Y."/>
            <person name="Shimizu F."/>
            <person name="Wakebe H."/>
            <person name="Hishigaki H."/>
            <person name="Watanabe T."/>
            <person name="Sugiyama A."/>
            <person name="Takemoto M."/>
            <person name="Kawakami B."/>
            <person name="Yamazaki M."/>
            <person name="Watanabe K."/>
            <person name="Kumagai A."/>
            <person name="Itakura S."/>
            <person name="Fukuzumi Y."/>
            <person name="Fujimori Y."/>
            <person name="Komiyama M."/>
            <person name="Tashiro H."/>
            <person name="Tanigami A."/>
            <person name="Fujiwara T."/>
            <person name="Ono T."/>
            <person name="Yamada K."/>
            <person name="Fujii Y."/>
            <person name="Ozaki K."/>
            <person name="Hirao M."/>
            <person name="Ohmori Y."/>
            <person name="Kawabata A."/>
            <person name="Hikiji T."/>
            <person name="Kobatake N."/>
            <person name="Inagaki H."/>
            <person name="Ikema Y."/>
            <person name="Okamoto S."/>
            <person name="Okitani R."/>
            <person name="Kawakami T."/>
            <person name="Noguchi S."/>
            <person name="Itoh T."/>
            <person name="Shigeta K."/>
            <person name="Senba T."/>
            <person name="Matsumura K."/>
            <person name="Nakajima Y."/>
            <person name="Mizuno T."/>
            <person name="Morinaga M."/>
            <person name="Sasaki M."/>
            <person name="Togashi T."/>
            <person name="Oyama M."/>
            <person name="Hata H."/>
            <person name="Watanabe M."/>
            <person name="Komatsu T."/>
            <person name="Mizushima-Sugano J."/>
            <person name="Satoh T."/>
            <person name="Shirai Y."/>
            <person name="Takahashi Y."/>
            <person name="Nakagawa K."/>
            <person name="Okumura K."/>
            <person name="Nagase T."/>
            <person name="Nomura N."/>
            <person name="Kikuchi H."/>
            <person name="Masuho Y."/>
            <person name="Yamashita R."/>
            <person name="Nakai K."/>
            <person name="Yada T."/>
            <person name="Nakamura Y."/>
            <person name="Ohara O."/>
            <person name="Isogai T."/>
            <person name="Sugano S."/>
        </authorList>
    </citation>
    <scope>NUCLEOTIDE SEQUENCE [LARGE SCALE MRNA] (ISOFORM 1)</scope>
</reference>
<reference key="3">
    <citation type="journal article" date="2004" name="Proc. Natl. Acad. Sci. U.S.A.">
        <title>Large-scale cDNA transfection screening for genes related to cancer development and progression.</title>
        <authorList>
            <person name="Wan D."/>
            <person name="Gong Y."/>
            <person name="Qin W."/>
            <person name="Zhang P."/>
            <person name="Li J."/>
            <person name="Wei L."/>
            <person name="Zhou X."/>
            <person name="Li H."/>
            <person name="Qiu X."/>
            <person name="Zhong F."/>
            <person name="He L."/>
            <person name="Yu J."/>
            <person name="Yao G."/>
            <person name="Jiang H."/>
            <person name="Qian L."/>
            <person name="Yu Y."/>
            <person name="Shu H."/>
            <person name="Chen X."/>
            <person name="Xu H."/>
            <person name="Guo M."/>
            <person name="Pan Z."/>
            <person name="Chen Y."/>
            <person name="Ge C."/>
            <person name="Yang S."/>
            <person name="Gu J."/>
        </authorList>
    </citation>
    <scope>NUCLEOTIDE SEQUENCE [LARGE SCALE MRNA] (ISOFORM 1)</scope>
</reference>
<reference key="4">
    <citation type="submission" date="2004-06" db="EMBL/GenBank/DDBJ databases">
        <title>Cloning of human full open reading frames in Gateway(TM) system entry vector (pDONR201).</title>
        <authorList>
            <person name="Ebert L."/>
            <person name="Schick M."/>
            <person name="Neubert P."/>
            <person name="Schatten R."/>
            <person name="Henze S."/>
            <person name="Korn B."/>
        </authorList>
    </citation>
    <scope>NUCLEOTIDE SEQUENCE [LARGE SCALE MRNA] (ISOFORM 1)</scope>
</reference>
<reference key="5">
    <citation type="journal article" date="2006" name="Nature">
        <title>DNA sequence and analysis of human chromosome 8.</title>
        <authorList>
            <person name="Nusbaum C."/>
            <person name="Mikkelsen T.S."/>
            <person name="Zody M.C."/>
            <person name="Asakawa S."/>
            <person name="Taudien S."/>
            <person name="Garber M."/>
            <person name="Kodira C.D."/>
            <person name="Schueler M.G."/>
            <person name="Shimizu A."/>
            <person name="Whittaker C.A."/>
            <person name="Chang J.L."/>
            <person name="Cuomo C.A."/>
            <person name="Dewar K."/>
            <person name="FitzGerald M.G."/>
            <person name="Yang X."/>
            <person name="Allen N.R."/>
            <person name="Anderson S."/>
            <person name="Asakawa T."/>
            <person name="Blechschmidt K."/>
            <person name="Bloom T."/>
            <person name="Borowsky M.L."/>
            <person name="Butler J."/>
            <person name="Cook A."/>
            <person name="Corum B."/>
            <person name="DeArellano K."/>
            <person name="DeCaprio D."/>
            <person name="Dooley K.T."/>
            <person name="Dorris L. III"/>
            <person name="Engels R."/>
            <person name="Gloeckner G."/>
            <person name="Hafez N."/>
            <person name="Hagopian D.S."/>
            <person name="Hall J.L."/>
            <person name="Ishikawa S.K."/>
            <person name="Jaffe D.B."/>
            <person name="Kamat A."/>
            <person name="Kudoh J."/>
            <person name="Lehmann R."/>
            <person name="Lokitsang T."/>
            <person name="Macdonald P."/>
            <person name="Major J.E."/>
            <person name="Matthews C.D."/>
            <person name="Mauceli E."/>
            <person name="Menzel U."/>
            <person name="Mihalev A.H."/>
            <person name="Minoshima S."/>
            <person name="Murayama Y."/>
            <person name="Naylor J.W."/>
            <person name="Nicol R."/>
            <person name="Nguyen C."/>
            <person name="O'Leary S.B."/>
            <person name="O'Neill K."/>
            <person name="Parker S.C.J."/>
            <person name="Polley A."/>
            <person name="Raymond C.K."/>
            <person name="Reichwald K."/>
            <person name="Rodriguez J."/>
            <person name="Sasaki T."/>
            <person name="Schilhabel M."/>
            <person name="Siddiqui R."/>
            <person name="Smith C.L."/>
            <person name="Sneddon T.P."/>
            <person name="Talamas J.A."/>
            <person name="Tenzin P."/>
            <person name="Topham K."/>
            <person name="Venkataraman V."/>
            <person name="Wen G."/>
            <person name="Yamazaki S."/>
            <person name="Young S.K."/>
            <person name="Zeng Q."/>
            <person name="Zimmer A.R."/>
            <person name="Rosenthal A."/>
            <person name="Birren B.W."/>
            <person name="Platzer M."/>
            <person name="Shimizu N."/>
            <person name="Lander E.S."/>
        </authorList>
    </citation>
    <scope>NUCLEOTIDE SEQUENCE [LARGE SCALE GENOMIC DNA]</scope>
</reference>
<reference key="6">
    <citation type="submission" date="2005-09" db="EMBL/GenBank/DDBJ databases">
        <authorList>
            <person name="Mural R.J."/>
            <person name="Istrail S."/>
            <person name="Sutton G.G."/>
            <person name="Florea L."/>
            <person name="Halpern A.L."/>
            <person name="Mobarry C.M."/>
            <person name="Lippert R."/>
            <person name="Walenz B."/>
            <person name="Shatkay H."/>
            <person name="Dew I."/>
            <person name="Miller J.R."/>
            <person name="Flanigan M.J."/>
            <person name="Edwards N.J."/>
            <person name="Bolanos R."/>
            <person name="Fasulo D."/>
            <person name="Halldorsson B.V."/>
            <person name="Hannenhalli S."/>
            <person name="Turner R."/>
            <person name="Yooseph S."/>
            <person name="Lu F."/>
            <person name="Nusskern D.R."/>
            <person name="Shue B.C."/>
            <person name="Zheng X.H."/>
            <person name="Zhong F."/>
            <person name="Delcher A.L."/>
            <person name="Huson D.H."/>
            <person name="Kravitz S.A."/>
            <person name="Mouchard L."/>
            <person name="Reinert K."/>
            <person name="Remington K.A."/>
            <person name="Clark A.G."/>
            <person name="Waterman M.S."/>
            <person name="Eichler E.E."/>
            <person name="Adams M.D."/>
            <person name="Hunkapiller M.W."/>
            <person name="Myers E.W."/>
            <person name="Venter J.C."/>
        </authorList>
    </citation>
    <scope>NUCLEOTIDE SEQUENCE [LARGE SCALE GENOMIC DNA]</scope>
</reference>
<reference key="7">
    <citation type="journal article" date="2004" name="Genome Res.">
        <title>The status, quality, and expansion of the NIH full-length cDNA project: the Mammalian Gene Collection (MGC).</title>
        <authorList>
            <consortium name="The MGC Project Team"/>
        </authorList>
    </citation>
    <scope>NUCLEOTIDE SEQUENCE [LARGE SCALE MRNA] (ISOFORMS 1 AND 2)</scope>
    <source>
        <tissue>Ovary</tissue>
        <tissue>Uterus</tissue>
    </source>
</reference>
<reference key="8">
    <citation type="journal article" date="2006" name="Cell">
        <title>Global, in vivo, and site-specific phosphorylation dynamics in signaling networks.</title>
        <authorList>
            <person name="Olsen J.V."/>
            <person name="Blagoev B."/>
            <person name="Gnad F."/>
            <person name="Macek B."/>
            <person name="Kumar C."/>
            <person name="Mortensen P."/>
            <person name="Mann M."/>
        </authorList>
    </citation>
    <scope>IDENTIFICATION BY MASS SPECTROMETRY [LARGE SCALE ANALYSIS]</scope>
    <source>
        <tissue>Cervix carcinoma</tissue>
    </source>
</reference>
<reference key="9">
    <citation type="journal article" date="2006" name="J. Biol. Chem.">
        <title>Members of RTP and REEP gene families influence functional bitter taste receptor expression.</title>
        <authorList>
            <person name="Behrens M."/>
            <person name="Bartelt J."/>
            <person name="Reichling C."/>
            <person name="Winnig M."/>
            <person name="Kuhn C."/>
            <person name="Meyerhof W."/>
        </authorList>
    </citation>
    <scope>TISSUE SPECIFICITY</scope>
</reference>
<reference key="10">
    <citation type="journal article" date="2008" name="Proc. Natl. Acad. Sci. U.S.A.">
        <title>A quantitative atlas of mitotic phosphorylation.</title>
        <authorList>
            <person name="Dephoure N."/>
            <person name="Zhou C."/>
            <person name="Villen J."/>
            <person name="Beausoleil S.A."/>
            <person name="Bakalarski C.E."/>
            <person name="Elledge S.J."/>
            <person name="Gygi S.P."/>
        </authorList>
    </citation>
    <scope>PHOSPHORYLATION [LARGE SCALE ANALYSIS] AT SER-152; SER-194; THR-196; SER-202; THR-250 AND SER-253</scope>
    <scope>IDENTIFICATION BY MASS SPECTROMETRY [LARGE SCALE ANALYSIS]</scope>
    <source>
        <tissue>Cervix carcinoma</tissue>
    </source>
</reference>
<reference key="11">
    <citation type="journal article" date="2011" name="BMC Syst. Biol.">
        <title>Initial characterization of the human central proteome.</title>
        <authorList>
            <person name="Burkard T.R."/>
            <person name="Planyavsky M."/>
            <person name="Kaupe I."/>
            <person name="Breitwieser F.P."/>
            <person name="Buerckstuemmer T."/>
            <person name="Bennett K.L."/>
            <person name="Superti-Furga G."/>
            <person name="Colinge J."/>
        </authorList>
    </citation>
    <scope>IDENTIFICATION BY MASS SPECTROMETRY [LARGE SCALE ANALYSIS]</scope>
</reference>
<reference key="12">
    <citation type="journal article" date="2011" name="Sci. Signal.">
        <title>System-wide temporal characterization of the proteome and phosphoproteome of human embryonic stem cell differentiation.</title>
        <authorList>
            <person name="Rigbolt K.T."/>
            <person name="Prokhorova T.A."/>
            <person name="Akimov V."/>
            <person name="Henningsen J."/>
            <person name="Johansen P.T."/>
            <person name="Kratchmarova I."/>
            <person name="Kassem M."/>
            <person name="Mann M."/>
            <person name="Olsen J.V."/>
            <person name="Blagoev B."/>
        </authorList>
    </citation>
    <scope>PHOSPHORYLATION [LARGE SCALE ANALYSIS] AT SER-152</scope>
    <scope>IDENTIFICATION BY MASS SPECTROMETRY [LARGE SCALE ANALYSIS]</scope>
</reference>
<reference key="13">
    <citation type="journal article" date="2013" name="Dev. Cell">
        <title>REEP3/4 ensure endoplasmic reticulum clearance from metaphase chromatin and proper nuclear envelope architecture.</title>
        <authorList>
            <person name="Schlaitz A.L."/>
            <person name="Thompson J."/>
            <person name="Wong C.C."/>
            <person name="Yates J.R. III"/>
            <person name="Heald R."/>
        </authorList>
    </citation>
    <scope>FUNCTION</scope>
    <scope>SUBCELLULAR LOCATION</scope>
</reference>
<reference key="14">
    <citation type="journal article" date="2013" name="J. Proteome Res.">
        <title>Toward a comprehensive characterization of a human cancer cell phosphoproteome.</title>
        <authorList>
            <person name="Zhou H."/>
            <person name="Di Palma S."/>
            <person name="Preisinger C."/>
            <person name="Peng M."/>
            <person name="Polat A.N."/>
            <person name="Heck A.J."/>
            <person name="Mohammed S."/>
        </authorList>
    </citation>
    <scope>PHOSPHORYLATION [LARGE SCALE ANALYSIS] AT SER-152</scope>
    <scope>IDENTIFICATION BY MASS SPECTROMETRY [LARGE SCALE ANALYSIS]</scope>
    <source>
        <tissue>Cervix carcinoma</tissue>
        <tissue>Erythroleukemia</tissue>
    </source>
</reference>
<reference key="15">
    <citation type="journal article" date="2014" name="J. Proteomics">
        <title>An enzyme assisted RP-RPLC approach for in-depth analysis of human liver phosphoproteome.</title>
        <authorList>
            <person name="Bian Y."/>
            <person name="Song C."/>
            <person name="Cheng K."/>
            <person name="Dong M."/>
            <person name="Wang F."/>
            <person name="Huang J."/>
            <person name="Sun D."/>
            <person name="Wang L."/>
            <person name="Ye M."/>
            <person name="Zou H."/>
        </authorList>
    </citation>
    <scope>IDENTIFICATION BY MASS SPECTROMETRY [LARGE SCALE ANALYSIS]</scope>
    <source>
        <tissue>Liver</tissue>
    </source>
</reference>